<keyword id="KW-0238">DNA-binding</keyword>
<keyword id="KW-0597">Phosphoprotein</keyword>
<keyword id="KW-1185">Reference proteome</keyword>
<keyword id="KW-0804">Transcription</keyword>
<keyword id="KW-0805">Transcription regulation</keyword>
<keyword id="KW-0902">Two-component regulatory system</keyword>
<feature type="chain" id="PRO_0000449417" description="Two-component response regulator PhoP">
    <location>
        <begin position="1"/>
        <end position="225"/>
    </location>
</feature>
<feature type="domain" description="Response regulatory" evidence="1">
    <location>
        <begin position="2"/>
        <end position="116"/>
    </location>
</feature>
<feature type="DNA-binding region" description="OmpR/PhoB-type" evidence="2">
    <location>
        <begin position="124"/>
        <end position="222"/>
    </location>
</feature>
<feature type="modified residue" description="4-aspartylphosphate" evidence="1">
    <location>
        <position position="51"/>
    </location>
</feature>
<organism>
    <name type="scientific">Pseudomonas aeruginosa (strain ATCC 15692 / DSM 22644 / CIP 104116 / JCM 14847 / LMG 12228 / 1C / PRS 101 / PAO1)</name>
    <dbReference type="NCBI Taxonomy" id="208964"/>
    <lineage>
        <taxon>Bacteria</taxon>
        <taxon>Pseudomonadati</taxon>
        <taxon>Pseudomonadota</taxon>
        <taxon>Gammaproteobacteria</taxon>
        <taxon>Pseudomonadales</taxon>
        <taxon>Pseudomonadaceae</taxon>
        <taxon>Pseudomonas</taxon>
    </lineage>
</organism>
<protein>
    <recommendedName>
        <fullName evidence="7">Two-component response regulator PhoP</fullName>
    </recommendedName>
</protein>
<gene>
    <name type="primary">phoP</name>
    <name type="ordered locus">PA1179</name>
</gene>
<reference key="1">
    <citation type="journal article" date="2000" name="Nature">
        <title>Complete genome sequence of Pseudomonas aeruginosa PAO1, an opportunistic pathogen.</title>
        <authorList>
            <person name="Stover C.K."/>
            <person name="Pham X.-Q.T."/>
            <person name="Erwin A.L."/>
            <person name="Mizoguchi S.D."/>
            <person name="Warrener P."/>
            <person name="Hickey M.J."/>
            <person name="Brinkman F.S.L."/>
            <person name="Hufnagle W.O."/>
            <person name="Kowalik D.J."/>
            <person name="Lagrou M."/>
            <person name="Garber R.L."/>
            <person name="Goltry L."/>
            <person name="Tolentino E."/>
            <person name="Westbrock-Wadman S."/>
            <person name="Yuan Y."/>
            <person name="Brody L.L."/>
            <person name="Coulter S.N."/>
            <person name="Folger K.R."/>
            <person name="Kas A."/>
            <person name="Larbig K."/>
            <person name="Lim R.M."/>
            <person name="Smith K.A."/>
            <person name="Spencer D.H."/>
            <person name="Wong G.K.-S."/>
            <person name="Wu Z."/>
            <person name="Paulsen I.T."/>
            <person name="Reizer J."/>
            <person name="Saier M.H. Jr."/>
            <person name="Hancock R.E.W."/>
            <person name="Lory S."/>
            <person name="Olson M.V."/>
        </authorList>
    </citation>
    <scope>NUCLEOTIDE SEQUENCE [LARGE SCALE GENOMIC DNA]</scope>
    <source>
        <strain>ATCC 15692 / DSM 22644 / CIP 104116 / JCM 14847 / LMG 12228 / 1C / PRS 101 / PAO1</strain>
    </source>
</reference>
<reference key="2">
    <citation type="journal article" date="1999" name="Mol. Microbiol.">
        <title>PhoP-PhoQ homologues in Pseudomonas aeruginosa regulate expression of the outer-membrane protein OprH and polymyxin B resistance.</title>
        <authorList>
            <person name="Macfarlane E.L."/>
            <person name="Kwasnicka A."/>
            <person name="Ochs M.M."/>
            <person name="Hancock R.E."/>
        </authorList>
    </citation>
    <scope>FUNCTION</scope>
    <scope>DISRUPTION PHENOTYPE</scope>
</reference>
<reference key="3">
    <citation type="journal article" date="2000" name="Microbiology">
        <title>Role of Pseudomonas aeruginosa PhoP-phoQ in resistance to antimicrobial cationic peptides and aminoglycosides.</title>
        <authorList>
            <person name="Macfarlane E.L.A."/>
            <person name="Kwasnicka A."/>
            <person name="Hancock R.E.W."/>
        </authorList>
    </citation>
    <scope>FUNCTION</scope>
    <scope>DISRUPTION PHENOTYPE</scope>
</reference>
<reference key="4">
    <citation type="journal article" date="2006" name="J. Bacteriol.">
        <title>Contribution of the PhoP-PhoQ and PmrA-PmrB two-component regulatory systems to Mg2+-induced gene regulation in Pseudomonas aeruginosa.</title>
        <authorList>
            <person name="McPhee J.B."/>
            <person name="Bains M."/>
            <person name="Winsor G."/>
            <person name="Lewenza S."/>
            <person name="Kwasnicka A."/>
            <person name="Brazas M.D."/>
            <person name="Brinkman F.S."/>
            <person name="Hancock R.E."/>
        </authorList>
    </citation>
    <scope>FUNCTION</scope>
    <scope>DNA-BINDING</scope>
</reference>
<reference key="5">
    <citation type="journal article" date="2014" name="J. Antimicrob. Chemother.">
        <title>Development of colistin resistance in pmrA-, phoP-, parR- and cprR-inactivated mutants of Pseudomonas aeruginosa.</title>
        <authorList>
            <person name="Lee J.Y."/>
            <person name="Chung E.S."/>
            <person name="Na I.Y."/>
            <person name="Kim H."/>
            <person name="Shin D."/>
            <person name="Ko K.S."/>
        </authorList>
    </citation>
    <scope>FUNCTION</scope>
</reference>
<name>PHOP_PSEAE</name>
<comment type="function">
    <text evidence="3 4 5 6">Member of the two-component regulatory system PhoP/PhoQ that plays a role in the regulation of resistance towards polymyxin B and cationic antimicrobial peptides in response to limiting concentrations of Mg(2+) (PubMed:10564474, PubMed:11021929, PubMed:24994873). Functions as a transcriptional activator by direct binding to a cis-acting sequence upstream of the target gene promoters including oprH and pmrH promoters (PubMed:16707691).</text>
</comment>
<comment type="disruption phenotype">
    <text evidence="3 4">Deletion leads to loss of expression of the outer-membrane protein OprH which is part of the response towards Mg(2+) starvation.</text>
</comment>
<sequence length="225" mass="25650">MKLLVVEDEALLRHHLYTRLGEQGHVVDAVPDAEEALYRVSEYHHDLAVIDLGLPGMSGLDLIRELRSQGKSFPILILTARGNWQDKVEGLAAGADDYVVKPFQFEELEARLNALLRRSSGFVQSTIEAGPLVLDLNRKQALVEEQPVALTAYEYRILEYLMRHHQQVVAKERLMEQLYPDDEERDANVIEVLVGRLRRKLEACGGFKPIDTVRGQGYLFTERCR</sequence>
<evidence type="ECO:0000255" key="1">
    <source>
        <dbReference type="PROSITE-ProRule" id="PRU00169"/>
    </source>
</evidence>
<evidence type="ECO:0000255" key="2">
    <source>
        <dbReference type="PROSITE-ProRule" id="PRU01091"/>
    </source>
</evidence>
<evidence type="ECO:0000269" key="3">
    <source>
    </source>
</evidence>
<evidence type="ECO:0000269" key="4">
    <source>
    </source>
</evidence>
<evidence type="ECO:0000269" key="5">
    <source>
    </source>
</evidence>
<evidence type="ECO:0000269" key="6">
    <source>
    </source>
</evidence>
<evidence type="ECO:0000303" key="7">
    <source>
    </source>
</evidence>
<dbReference type="EMBL" id="AE004091">
    <property type="protein sequence ID" value="AAG04568.1"/>
    <property type="molecule type" value="Genomic_DNA"/>
</dbReference>
<dbReference type="PIR" id="H83497">
    <property type="entry name" value="H83497"/>
</dbReference>
<dbReference type="RefSeq" id="NP_249870.1">
    <property type="nucleotide sequence ID" value="NC_002516.2"/>
</dbReference>
<dbReference type="RefSeq" id="WP_003082436.1">
    <property type="nucleotide sequence ID" value="NZ_QZGE01000006.1"/>
</dbReference>
<dbReference type="SMR" id="Q9I4F9"/>
<dbReference type="FunCoup" id="Q9I4F9">
    <property type="interactions" value="155"/>
</dbReference>
<dbReference type="STRING" id="208964.PA1179"/>
<dbReference type="PaxDb" id="208964-PA1179"/>
<dbReference type="DNASU" id="879194"/>
<dbReference type="GeneID" id="879194"/>
<dbReference type="KEGG" id="pae:PA1179"/>
<dbReference type="PATRIC" id="fig|208964.12.peg.1224"/>
<dbReference type="PseudoCAP" id="PA1179"/>
<dbReference type="HOGENOM" id="CLU_000445_30_1_6"/>
<dbReference type="InParanoid" id="Q9I4F9"/>
<dbReference type="OrthoDB" id="9802426at2"/>
<dbReference type="PhylomeDB" id="Q9I4F9"/>
<dbReference type="BioCyc" id="PAER208964:G1FZ6-1204-MONOMER"/>
<dbReference type="Proteomes" id="UP000002438">
    <property type="component" value="Chromosome"/>
</dbReference>
<dbReference type="GO" id="GO:0005829">
    <property type="term" value="C:cytosol"/>
    <property type="evidence" value="ECO:0000318"/>
    <property type="project" value="GO_Central"/>
</dbReference>
<dbReference type="GO" id="GO:0032993">
    <property type="term" value="C:protein-DNA complex"/>
    <property type="evidence" value="ECO:0000318"/>
    <property type="project" value="GO_Central"/>
</dbReference>
<dbReference type="GO" id="GO:0000156">
    <property type="term" value="F:phosphorelay response regulator activity"/>
    <property type="evidence" value="ECO:0000318"/>
    <property type="project" value="GO_Central"/>
</dbReference>
<dbReference type="GO" id="GO:0000976">
    <property type="term" value="F:transcription cis-regulatory region binding"/>
    <property type="evidence" value="ECO:0000318"/>
    <property type="project" value="GO_Central"/>
</dbReference>
<dbReference type="GO" id="GO:0071073">
    <property type="term" value="P:positive regulation of phospholipid biosynthetic process"/>
    <property type="evidence" value="ECO:0000315"/>
    <property type="project" value="PseudoCAP"/>
</dbReference>
<dbReference type="GO" id="GO:0006355">
    <property type="term" value="P:regulation of DNA-templated transcription"/>
    <property type="evidence" value="ECO:0000318"/>
    <property type="project" value="GO_Central"/>
</dbReference>
<dbReference type="CDD" id="cd19934">
    <property type="entry name" value="REC_OmpR_EcPhoP-like"/>
    <property type="match status" value="1"/>
</dbReference>
<dbReference type="CDD" id="cd00383">
    <property type="entry name" value="trans_reg_C"/>
    <property type="match status" value="1"/>
</dbReference>
<dbReference type="FunFam" id="3.40.50.2300:FF:000002">
    <property type="entry name" value="DNA-binding response regulator PhoP"/>
    <property type="match status" value="1"/>
</dbReference>
<dbReference type="FunFam" id="1.10.10.10:FF:000098">
    <property type="entry name" value="Two-component system response regulator PhoP"/>
    <property type="match status" value="1"/>
</dbReference>
<dbReference type="Gene3D" id="3.40.50.2300">
    <property type="match status" value="1"/>
</dbReference>
<dbReference type="Gene3D" id="6.10.250.690">
    <property type="match status" value="1"/>
</dbReference>
<dbReference type="Gene3D" id="1.10.10.10">
    <property type="entry name" value="Winged helix-like DNA-binding domain superfamily/Winged helix DNA-binding domain"/>
    <property type="match status" value="1"/>
</dbReference>
<dbReference type="InterPro" id="IPR011006">
    <property type="entry name" value="CheY-like_superfamily"/>
</dbReference>
<dbReference type="InterPro" id="IPR001867">
    <property type="entry name" value="OmpR/PhoB-type_DNA-bd"/>
</dbReference>
<dbReference type="InterPro" id="IPR001789">
    <property type="entry name" value="Sig_transdc_resp-reg_receiver"/>
</dbReference>
<dbReference type="InterPro" id="IPR039420">
    <property type="entry name" value="WalR-like"/>
</dbReference>
<dbReference type="InterPro" id="IPR036388">
    <property type="entry name" value="WH-like_DNA-bd_sf"/>
</dbReference>
<dbReference type="PANTHER" id="PTHR48111">
    <property type="entry name" value="REGULATOR OF RPOS"/>
    <property type="match status" value="1"/>
</dbReference>
<dbReference type="PANTHER" id="PTHR48111:SF71">
    <property type="entry name" value="TRANSCRIPTIONAL REGULATORY PROTEIN PHOP"/>
    <property type="match status" value="1"/>
</dbReference>
<dbReference type="Pfam" id="PF00072">
    <property type="entry name" value="Response_reg"/>
    <property type="match status" value="1"/>
</dbReference>
<dbReference type="Pfam" id="PF00486">
    <property type="entry name" value="Trans_reg_C"/>
    <property type="match status" value="1"/>
</dbReference>
<dbReference type="SMART" id="SM00448">
    <property type="entry name" value="REC"/>
    <property type="match status" value="1"/>
</dbReference>
<dbReference type="SMART" id="SM00862">
    <property type="entry name" value="Trans_reg_C"/>
    <property type="match status" value="1"/>
</dbReference>
<dbReference type="SUPFAM" id="SSF52172">
    <property type="entry name" value="CheY-like"/>
    <property type="match status" value="1"/>
</dbReference>
<dbReference type="PROSITE" id="PS51755">
    <property type="entry name" value="OMPR_PHOB"/>
    <property type="match status" value="1"/>
</dbReference>
<dbReference type="PROSITE" id="PS50110">
    <property type="entry name" value="RESPONSE_REGULATORY"/>
    <property type="match status" value="1"/>
</dbReference>
<accession>Q9I4F9</accession>
<proteinExistence type="evidence at protein level"/>